<reference key="1">
    <citation type="journal article" date="2003" name="Nat. Genet.">
        <title>Comparative analysis of the genome sequences of Bordetella pertussis, Bordetella parapertussis and Bordetella bronchiseptica.</title>
        <authorList>
            <person name="Parkhill J."/>
            <person name="Sebaihia M."/>
            <person name="Preston A."/>
            <person name="Murphy L.D."/>
            <person name="Thomson N.R."/>
            <person name="Harris D.E."/>
            <person name="Holden M.T.G."/>
            <person name="Churcher C.M."/>
            <person name="Bentley S.D."/>
            <person name="Mungall K.L."/>
            <person name="Cerdeno-Tarraga A.-M."/>
            <person name="Temple L."/>
            <person name="James K.D."/>
            <person name="Harris B."/>
            <person name="Quail M.A."/>
            <person name="Achtman M."/>
            <person name="Atkin R."/>
            <person name="Baker S."/>
            <person name="Basham D."/>
            <person name="Bason N."/>
            <person name="Cherevach I."/>
            <person name="Chillingworth T."/>
            <person name="Collins M."/>
            <person name="Cronin A."/>
            <person name="Davis P."/>
            <person name="Doggett J."/>
            <person name="Feltwell T."/>
            <person name="Goble A."/>
            <person name="Hamlin N."/>
            <person name="Hauser H."/>
            <person name="Holroyd S."/>
            <person name="Jagels K."/>
            <person name="Leather S."/>
            <person name="Moule S."/>
            <person name="Norberczak H."/>
            <person name="O'Neil S."/>
            <person name="Ormond D."/>
            <person name="Price C."/>
            <person name="Rabbinowitsch E."/>
            <person name="Rutter S."/>
            <person name="Sanders M."/>
            <person name="Saunders D."/>
            <person name="Seeger K."/>
            <person name="Sharp S."/>
            <person name="Simmonds M."/>
            <person name="Skelton J."/>
            <person name="Squares R."/>
            <person name="Squares S."/>
            <person name="Stevens K."/>
            <person name="Unwin L."/>
            <person name="Whitehead S."/>
            <person name="Barrell B.G."/>
            <person name="Maskell D.J."/>
        </authorList>
    </citation>
    <scope>NUCLEOTIDE SEQUENCE [LARGE SCALE GENOMIC DNA]</scope>
    <source>
        <strain>12822 / ATCC BAA-587 / NCTC 13253</strain>
    </source>
</reference>
<proteinExistence type="inferred from homology"/>
<dbReference type="EC" id="3.1.26.3" evidence="1"/>
<dbReference type="EMBL" id="BX640433">
    <property type="protein sequence ID" value="CAE38580.1"/>
    <property type="molecule type" value="Genomic_DNA"/>
</dbReference>
<dbReference type="SMR" id="Q7W5J6"/>
<dbReference type="KEGG" id="bpa:BPP3295"/>
<dbReference type="HOGENOM" id="CLU_000907_1_1_4"/>
<dbReference type="Proteomes" id="UP000001421">
    <property type="component" value="Chromosome"/>
</dbReference>
<dbReference type="GO" id="GO:0005737">
    <property type="term" value="C:cytoplasm"/>
    <property type="evidence" value="ECO:0007669"/>
    <property type="project" value="UniProtKB-SubCell"/>
</dbReference>
<dbReference type="GO" id="GO:0003725">
    <property type="term" value="F:double-stranded RNA binding"/>
    <property type="evidence" value="ECO:0007669"/>
    <property type="project" value="TreeGrafter"/>
</dbReference>
<dbReference type="GO" id="GO:0046872">
    <property type="term" value="F:metal ion binding"/>
    <property type="evidence" value="ECO:0007669"/>
    <property type="project" value="UniProtKB-KW"/>
</dbReference>
<dbReference type="GO" id="GO:0004525">
    <property type="term" value="F:ribonuclease III activity"/>
    <property type="evidence" value="ECO:0007669"/>
    <property type="project" value="UniProtKB-UniRule"/>
</dbReference>
<dbReference type="GO" id="GO:0019843">
    <property type="term" value="F:rRNA binding"/>
    <property type="evidence" value="ECO:0007669"/>
    <property type="project" value="UniProtKB-KW"/>
</dbReference>
<dbReference type="GO" id="GO:0006397">
    <property type="term" value="P:mRNA processing"/>
    <property type="evidence" value="ECO:0007669"/>
    <property type="project" value="UniProtKB-UniRule"/>
</dbReference>
<dbReference type="GO" id="GO:0010468">
    <property type="term" value="P:regulation of gene expression"/>
    <property type="evidence" value="ECO:0007669"/>
    <property type="project" value="TreeGrafter"/>
</dbReference>
<dbReference type="GO" id="GO:0006364">
    <property type="term" value="P:rRNA processing"/>
    <property type="evidence" value="ECO:0007669"/>
    <property type="project" value="UniProtKB-UniRule"/>
</dbReference>
<dbReference type="GO" id="GO:0008033">
    <property type="term" value="P:tRNA processing"/>
    <property type="evidence" value="ECO:0007669"/>
    <property type="project" value="UniProtKB-KW"/>
</dbReference>
<dbReference type="CDD" id="cd10845">
    <property type="entry name" value="DSRM_RNAse_III_family"/>
    <property type="match status" value="1"/>
</dbReference>
<dbReference type="CDD" id="cd00593">
    <property type="entry name" value="RIBOc"/>
    <property type="match status" value="1"/>
</dbReference>
<dbReference type="FunFam" id="1.10.1520.10:FF:000001">
    <property type="entry name" value="Ribonuclease 3"/>
    <property type="match status" value="1"/>
</dbReference>
<dbReference type="Gene3D" id="3.30.160.20">
    <property type="match status" value="1"/>
</dbReference>
<dbReference type="Gene3D" id="1.10.1520.10">
    <property type="entry name" value="Ribonuclease III domain"/>
    <property type="match status" value="1"/>
</dbReference>
<dbReference type="HAMAP" id="MF_00104">
    <property type="entry name" value="RNase_III"/>
    <property type="match status" value="1"/>
</dbReference>
<dbReference type="InterPro" id="IPR014720">
    <property type="entry name" value="dsRBD_dom"/>
</dbReference>
<dbReference type="InterPro" id="IPR011907">
    <property type="entry name" value="RNase_III"/>
</dbReference>
<dbReference type="InterPro" id="IPR000999">
    <property type="entry name" value="RNase_III_dom"/>
</dbReference>
<dbReference type="InterPro" id="IPR036389">
    <property type="entry name" value="RNase_III_sf"/>
</dbReference>
<dbReference type="NCBIfam" id="TIGR02191">
    <property type="entry name" value="RNaseIII"/>
    <property type="match status" value="1"/>
</dbReference>
<dbReference type="PANTHER" id="PTHR11207:SF0">
    <property type="entry name" value="RIBONUCLEASE 3"/>
    <property type="match status" value="1"/>
</dbReference>
<dbReference type="PANTHER" id="PTHR11207">
    <property type="entry name" value="RIBONUCLEASE III"/>
    <property type="match status" value="1"/>
</dbReference>
<dbReference type="Pfam" id="PF00035">
    <property type="entry name" value="dsrm"/>
    <property type="match status" value="1"/>
</dbReference>
<dbReference type="Pfam" id="PF14622">
    <property type="entry name" value="Ribonucleas_3_3"/>
    <property type="match status" value="1"/>
</dbReference>
<dbReference type="SMART" id="SM00358">
    <property type="entry name" value="DSRM"/>
    <property type="match status" value="1"/>
</dbReference>
<dbReference type="SMART" id="SM00535">
    <property type="entry name" value="RIBOc"/>
    <property type="match status" value="1"/>
</dbReference>
<dbReference type="SUPFAM" id="SSF54768">
    <property type="entry name" value="dsRNA-binding domain-like"/>
    <property type="match status" value="1"/>
</dbReference>
<dbReference type="SUPFAM" id="SSF69065">
    <property type="entry name" value="RNase III domain-like"/>
    <property type="match status" value="1"/>
</dbReference>
<dbReference type="PROSITE" id="PS50137">
    <property type="entry name" value="DS_RBD"/>
    <property type="match status" value="1"/>
</dbReference>
<dbReference type="PROSITE" id="PS00517">
    <property type="entry name" value="RNASE_3_1"/>
    <property type="match status" value="1"/>
</dbReference>
<dbReference type="PROSITE" id="PS50142">
    <property type="entry name" value="RNASE_3_2"/>
    <property type="match status" value="1"/>
</dbReference>
<protein>
    <recommendedName>
        <fullName evidence="1">Ribonuclease 3</fullName>
        <ecNumber evidence="1">3.1.26.3</ecNumber>
    </recommendedName>
    <alternativeName>
        <fullName evidence="1">Ribonuclease III</fullName>
        <shortName evidence="1">RNase III</shortName>
    </alternativeName>
</protein>
<feature type="chain" id="PRO_0000228506" description="Ribonuclease 3">
    <location>
        <begin position="1"/>
        <end position="256"/>
    </location>
</feature>
<feature type="domain" description="RNase III" evidence="1">
    <location>
        <begin position="6"/>
        <end position="128"/>
    </location>
</feature>
<feature type="domain" description="DRBM" evidence="1">
    <location>
        <begin position="155"/>
        <end position="225"/>
    </location>
</feature>
<feature type="active site" evidence="1">
    <location>
        <position position="45"/>
    </location>
</feature>
<feature type="active site" evidence="1">
    <location>
        <position position="117"/>
    </location>
</feature>
<feature type="binding site" evidence="1">
    <location>
        <position position="41"/>
    </location>
    <ligand>
        <name>Mg(2+)</name>
        <dbReference type="ChEBI" id="CHEBI:18420"/>
    </ligand>
</feature>
<feature type="binding site" evidence="1">
    <location>
        <position position="114"/>
    </location>
    <ligand>
        <name>Mg(2+)</name>
        <dbReference type="ChEBI" id="CHEBI:18420"/>
    </ligand>
</feature>
<feature type="binding site" evidence="1">
    <location>
        <position position="117"/>
    </location>
    <ligand>
        <name>Mg(2+)</name>
        <dbReference type="ChEBI" id="CHEBI:18420"/>
    </ligand>
</feature>
<evidence type="ECO:0000255" key="1">
    <source>
        <dbReference type="HAMAP-Rule" id="MF_00104"/>
    </source>
</evidence>
<gene>
    <name evidence="1" type="primary">rnc</name>
    <name type="ordered locus">BPP3295</name>
</gene>
<keyword id="KW-0963">Cytoplasm</keyword>
<keyword id="KW-0255">Endonuclease</keyword>
<keyword id="KW-0378">Hydrolase</keyword>
<keyword id="KW-0460">Magnesium</keyword>
<keyword id="KW-0479">Metal-binding</keyword>
<keyword id="KW-0507">mRNA processing</keyword>
<keyword id="KW-0540">Nuclease</keyword>
<keyword id="KW-0694">RNA-binding</keyword>
<keyword id="KW-0698">rRNA processing</keyword>
<keyword id="KW-0699">rRNA-binding</keyword>
<keyword id="KW-0819">tRNA processing</keyword>
<organism>
    <name type="scientific">Bordetella parapertussis (strain 12822 / ATCC BAA-587 / NCTC 13253)</name>
    <dbReference type="NCBI Taxonomy" id="257311"/>
    <lineage>
        <taxon>Bacteria</taxon>
        <taxon>Pseudomonadati</taxon>
        <taxon>Pseudomonadota</taxon>
        <taxon>Betaproteobacteria</taxon>
        <taxon>Burkholderiales</taxon>
        <taxon>Alcaligenaceae</taxon>
        <taxon>Bordetella</taxon>
    </lineage>
</organism>
<comment type="function">
    <text evidence="1">Digests double-stranded RNA. Involved in the processing of primary rRNA transcript to yield the immediate precursors to the large and small rRNAs (23S and 16S). Processes some mRNAs, and tRNAs when they are encoded in the rRNA operon. Processes pre-crRNA and tracrRNA of type II CRISPR loci if present in the organism.</text>
</comment>
<comment type="catalytic activity">
    <reaction evidence="1">
        <text>Endonucleolytic cleavage to 5'-phosphomonoester.</text>
        <dbReference type="EC" id="3.1.26.3"/>
    </reaction>
</comment>
<comment type="cofactor">
    <cofactor evidence="1">
        <name>Mg(2+)</name>
        <dbReference type="ChEBI" id="CHEBI:18420"/>
    </cofactor>
</comment>
<comment type="subunit">
    <text evidence="1">Homodimer.</text>
</comment>
<comment type="subcellular location">
    <subcellularLocation>
        <location evidence="1">Cytoplasm</location>
    </subcellularLocation>
</comment>
<comment type="similarity">
    <text evidence="1">Belongs to the ribonuclease III family.</text>
</comment>
<name>RNC_BORPA</name>
<sequence length="256" mass="27829">MTAMSLATLETRLDHRFGDKALLEQALTHRSHGARHNERLEFLGDSVLNFVVAAMLFERYGKLDEGDLSRLRANLVKQASLADIAQRLDLSQYLRLGEGELKSGGFRRPSILADTVEALFGAVFLDAGFEAARRVIVRQYQPVMAHVDPKTLGKDAKTLLQEFLQGRKLALPQYTVVATHGAAHSQQFEVECAIPALEIKIVAPGASRRAAEQSAAKVALEAAQAVLPAARAARKSGKARKTAQLSLPVAVAQEVK</sequence>
<accession>Q7W5J6</accession>